<keyword id="KW-0030">Aminoacyl-tRNA synthetase</keyword>
<keyword id="KW-0067">ATP-binding</keyword>
<keyword id="KW-0963">Cytoplasm</keyword>
<keyword id="KW-0436">Ligase</keyword>
<keyword id="KW-0547">Nucleotide-binding</keyword>
<keyword id="KW-0648">Protein biosynthesis</keyword>
<accession>Q3K3R5</accession>
<comment type="function">
    <text evidence="1">Catalyzes the attachment of glutamate to tRNA(Glu) in a two-step reaction: glutamate is first activated by ATP to form Glu-AMP and then transferred to the acceptor end of tRNA(Glu).</text>
</comment>
<comment type="catalytic activity">
    <reaction evidence="1">
        <text>tRNA(Glu) + L-glutamate + ATP = L-glutamyl-tRNA(Glu) + AMP + diphosphate</text>
        <dbReference type="Rhea" id="RHEA:23540"/>
        <dbReference type="Rhea" id="RHEA-COMP:9663"/>
        <dbReference type="Rhea" id="RHEA-COMP:9680"/>
        <dbReference type="ChEBI" id="CHEBI:29985"/>
        <dbReference type="ChEBI" id="CHEBI:30616"/>
        <dbReference type="ChEBI" id="CHEBI:33019"/>
        <dbReference type="ChEBI" id="CHEBI:78442"/>
        <dbReference type="ChEBI" id="CHEBI:78520"/>
        <dbReference type="ChEBI" id="CHEBI:456215"/>
        <dbReference type="EC" id="6.1.1.17"/>
    </reaction>
</comment>
<comment type="subunit">
    <text evidence="1">Monomer.</text>
</comment>
<comment type="subcellular location">
    <subcellularLocation>
        <location evidence="1">Cytoplasm</location>
    </subcellularLocation>
</comment>
<comment type="similarity">
    <text evidence="1">Belongs to the class-I aminoacyl-tRNA synthetase family. Glutamate--tRNA ligase type 1 subfamily.</text>
</comment>
<comment type="sequence caution" evidence="2">
    <conflict type="erroneous initiation">
        <sequence resource="EMBL-CDS" id="ABA45477"/>
    </conflict>
</comment>
<organism>
    <name type="scientific">Streptococcus agalactiae serotype Ia (strain ATCC 27591 / A909 / CDC SS700)</name>
    <dbReference type="NCBI Taxonomy" id="205921"/>
    <lineage>
        <taxon>Bacteria</taxon>
        <taxon>Bacillati</taxon>
        <taxon>Bacillota</taxon>
        <taxon>Bacilli</taxon>
        <taxon>Lactobacillales</taxon>
        <taxon>Streptococcaceae</taxon>
        <taxon>Streptococcus</taxon>
    </lineage>
</organism>
<name>SYE_STRA1</name>
<evidence type="ECO:0000255" key="1">
    <source>
        <dbReference type="HAMAP-Rule" id="MF_00022"/>
    </source>
</evidence>
<evidence type="ECO:0000305" key="2"/>
<proteinExistence type="inferred from homology"/>
<dbReference type="EC" id="6.1.1.17" evidence="1"/>
<dbReference type="EMBL" id="CP000114">
    <property type="protein sequence ID" value="ABA45477.1"/>
    <property type="status" value="ALT_INIT"/>
    <property type="molecule type" value="Genomic_DNA"/>
</dbReference>
<dbReference type="RefSeq" id="WP_001284504.1">
    <property type="nucleotide sequence ID" value="NC_007432.1"/>
</dbReference>
<dbReference type="SMR" id="Q3K3R5"/>
<dbReference type="KEGG" id="sak:SAK_0165"/>
<dbReference type="HOGENOM" id="CLU_015768_6_1_9"/>
<dbReference type="GO" id="GO:0005829">
    <property type="term" value="C:cytosol"/>
    <property type="evidence" value="ECO:0007669"/>
    <property type="project" value="TreeGrafter"/>
</dbReference>
<dbReference type="GO" id="GO:0005524">
    <property type="term" value="F:ATP binding"/>
    <property type="evidence" value="ECO:0007669"/>
    <property type="project" value="UniProtKB-UniRule"/>
</dbReference>
<dbReference type="GO" id="GO:0004818">
    <property type="term" value="F:glutamate-tRNA ligase activity"/>
    <property type="evidence" value="ECO:0007669"/>
    <property type="project" value="UniProtKB-UniRule"/>
</dbReference>
<dbReference type="GO" id="GO:0000049">
    <property type="term" value="F:tRNA binding"/>
    <property type="evidence" value="ECO:0007669"/>
    <property type="project" value="InterPro"/>
</dbReference>
<dbReference type="GO" id="GO:0008270">
    <property type="term" value="F:zinc ion binding"/>
    <property type="evidence" value="ECO:0007669"/>
    <property type="project" value="InterPro"/>
</dbReference>
<dbReference type="GO" id="GO:0006424">
    <property type="term" value="P:glutamyl-tRNA aminoacylation"/>
    <property type="evidence" value="ECO:0007669"/>
    <property type="project" value="UniProtKB-UniRule"/>
</dbReference>
<dbReference type="CDD" id="cd00808">
    <property type="entry name" value="GluRS_core"/>
    <property type="match status" value="1"/>
</dbReference>
<dbReference type="FunFam" id="1.10.10.350:FF:000002">
    <property type="entry name" value="Glutamate--tRNA ligase"/>
    <property type="match status" value="1"/>
</dbReference>
<dbReference type="FunFam" id="3.40.50.620:FF:000007">
    <property type="entry name" value="Glutamate--tRNA ligase"/>
    <property type="match status" value="1"/>
</dbReference>
<dbReference type="Gene3D" id="1.10.10.350">
    <property type="match status" value="1"/>
</dbReference>
<dbReference type="Gene3D" id="3.40.50.620">
    <property type="entry name" value="HUPs"/>
    <property type="match status" value="1"/>
</dbReference>
<dbReference type="HAMAP" id="MF_00022">
    <property type="entry name" value="Glu_tRNA_synth_type1"/>
    <property type="match status" value="1"/>
</dbReference>
<dbReference type="InterPro" id="IPR045462">
    <property type="entry name" value="aa-tRNA-synth_I_cd-bd"/>
</dbReference>
<dbReference type="InterPro" id="IPR020751">
    <property type="entry name" value="aa-tRNA-synth_I_codon-bd_sub2"/>
</dbReference>
<dbReference type="InterPro" id="IPR001412">
    <property type="entry name" value="aa-tRNA-synth_I_CS"/>
</dbReference>
<dbReference type="InterPro" id="IPR008925">
    <property type="entry name" value="aa_tRNA-synth_I_cd-bd_sf"/>
</dbReference>
<dbReference type="InterPro" id="IPR004527">
    <property type="entry name" value="Glu-tRNA-ligase_bac/mito"/>
</dbReference>
<dbReference type="InterPro" id="IPR000924">
    <property type="entry name" value="Glu/Gln-tRNA-synth"/>
</dbReference>
<dbReference type="InterPro" id="IPR020058">
    <property type="entry name" value="Glu/Gln-tRNA-synth_Ib_cat-dom"/>
</dbReference>
<dbReference type="InterPro" id="IPR049940">
    <property type="entry name" value="GluQ/Sye"/>
</dbReference>
<dbReference type="InterPro" id="IPR033910">
    <property type="entry name" value="GluRS_core"/>
</dbReference>
<dbReference type="InterPro" id="IPR014729">
    <property type="entry name" value="Rossmann-like_a/b/a_fold"/>
</dbReference>
<dbReference type="NCBIfam" id="TIGR00464">
    <property type="entry name" value="gltX_bact"/>
    <property type="match status" value="1"/>
</dbReference>
<dbReference type="PANTHER" id="PTHR43311">
    <property type="entry name" value="GLUTAMATE--TRNA LIGASE"/>
    <property type="match status" value="1"/>
</dbReference>
<dbReference type="PANTHER" id="PTHR43311:SF2">
    <property type="entry name" value="GLUTAMATE--TRNA LIGASE, MITOCHONDRIAL-RELATED"/>
    <property type="match status" value="1"/>
</dbReference>
<dbReference type="Pfam" id="PF19269">
    <property type="entry name" value="Anticodon_2"/>
    <property type="match status" value="1"/>
</dbReference>
<dbReference type="Pfam" id="PF00749">
    <property type="entry name" value="tRNA-synt_1c"/>
    <property type="match status" value="1"/>
</dbReference>
<dbReference type="PRINTS" id="PR00987">
    <property type="entry name" value="TRNASYNTHGLU"/>
</dbReference>
<dbReference type="SUPFAM" id="SSF48163">
    <property type="entry name" value="An anticodon-binding domain of class I aminoacyl-tRNA synthetases"/>
    <property type="match status" value="1"/>
</dbReference>
<dbReference type="SUPFAM" id="SSF52374">
    <property type="entry name" value="Nucleotidylyl transferase"/>
    <property type="match status" value="1"/>
</dbReference>
<dbReference type="PROSITE" id="PS00178">
    <property type="entry name" value="AA_TRNA_LIGASE_I"/>
    <property type="match status" value="1"/>
</dbReference>
<feature type="chain" id="PRO_0000237407" description="Glutamate--tRNA ligase">
    <location>
        <begin position="1"/>
        <end position="484"/>
    </location>
</feature>
<feature type="short sequence motif" description="'HIGH' region" evidence="1">
    <location>
        <begin position="11"/>
        <end position="21"/>
    </location>
</feature>
<feature type="short sequence motif" description="'KMSKS' region" evidence="1">
    <location>
        <begin position="255"/>
        <end position="259"/>
    </location>
</feature>
<feature type="binding site" evidence="1">
    <location>
        <position position="258"/>
    </location>
    <ligand>
        <name>ATP</name>
        <dbReference type="ChEBI" id="CHEBI:30616"/>
    </ligand>
</feature>
<gene>
    <name evidence="1" type="primary">gltX</name>
    <name type="ordered locus">SAK_0165</name>
</gene>
<sequence length="484" mass="55540">MANKIRVRYAPSPTGLLHIGNARTALFNYLYARHHGGDFVIRIEDTDRKRHVEDGERSQLENLRWLGMDWDESPETHENYRQSERLELYQRYIDQLLAEGKAYKSYVTEEELAAERERQELAGETPRYINEFIGMSETEKEAYIAEREAAGIIPTVRLAVSESGIYKWTDMVKGDIEFEGSNIGGDWVIQKKDGYPTYNFAVVIDDHVMQISHVIRGDDHIANTPKQLMVYEALGWEAPQFGHMTLIINSETGKKLSKRDTNTLQFIEDYRKKGYMSEAVFNFIALLGWNPGGEEEIFSREQLINLFDENRLSKSPAAFDQKKMDWMSNDYLKNADFESVFALCKPFLEEAGRLTDKAEKLVELYKPQLKSADEIVPLTDLFFADFPELTEAEKEVMAAETVPTVLSVFKEKLVSLSDEEFTRDTIFPQIKAVQKETGIKGKNLFMPIRIAVSGEMHGPELPDTIYLLGKEKSVQHIDNMLAKL</sequence>
<protein>
    <recommendedName>
        <fullName evidence="1">Glutamate--tRNA ligase</fullName>
        <ecNumber evidence="1">6.1.1.17</ecNumber>
    </recommendedName>
    <alternativeName>
        <fullName evidence="1">Glutamyl-tRNA synthetase</fullName>
        <shortName evidence="1">GluRS</shortName>
    </alternativeName>
</protein>
<reference key="1">
    <citation type="journal article" date="2005" name="Proc. Natl. Acad. Sci. U.S.A.">
        <title>Genome analysis of multiple pathogenic isolates of Streptococcus agalactiae: implications for the microbial 'pan-genome'.</title>
        <authorList>
            <person name="Tettelin H."/>
            <person name="Masignani V."/>
            <person name="Cieslewicz M.J."/>
            <person name="Donati C."/>
            <person name="Medini D."/>
            <person name="Ward N.L."/>
            <person name="Angiuoli S.V."/>
            <person name="Crabtree J."/>
            <person name="Jones A.L."/>
            <person name="Durkin A.S."/>
            <person name="DeBoy R.T."/>
            <person name="Davidsen T.M."/>
            <person name="Mora M."/>
            <person name="Scarselli M."/>
            <person name="Margarit y Ros I."/>
            <person name="Peterson J.D."/>
            <person name="Hauser C.R."/>
            <person name="Sundaram J.P."/>
            <person name="Nelson W.C."/>
            <person name="Madupu R."/>
            <person name="Brinkac L.M."/>
            <person name="Dodson R.J."/>
            <person name="Rosovitz M.J."/>
            <person name="Sullivan S.A."/>
            <person name="Daugherty S.C."/>
            <person name="Haft D.H."/>
            <person name="Selengut J."/>
            <person name="Gwinn M.L."/>
            <person name="Zhou L."/>
            <person name="Zafar N."/>
            <person name="Khouri H."/>
            <person name="Radune D."/>
            <person name="Dimitrov G."/>
            <person name="Watkins K."/>
            <person name="O'Connor K.J."/>
            <person name="Smith S."/>
            <person name="Utterback T.R."/>
            <person name="White O."/>
            <person name="Rubens C.E."/>
            <person name="Grandi G."/>
            <person name="Madoff L.C."/>
            <person name="Kasper D.L."/>
            <person name="Telford J.L."/>
            <person name="Wessels M.R."/>
            <person name="Rappuoli R."/>
            <person name="Fraser C.M."/>
        </authorList>
    </citation>
    <scope>NUCLEOTIDE SEQUENCE [LARGE SCALE GENOMIC DNA]</scope>
    <source>
        <strain>ATCC 27591 / A909 / CDC SS700</strain>
    </source>
</reference>